<sequence>MIPATRSLLCAALLLLATSRLATGAPIANELRCQCLQTMAGIHLKNIQSLKVLPSGPHCTQTEVIATLKNGREACLDPEAPLVQKIVQKMLKGVPK</sequence>
<evidence type="ECO:0000250" key="1"/>
<evidence type="ECO:0000269" key="2">
    <source>
    </source>
</evidence>
<evidence type="ECO:0000305" key="3"/>
<feature type="signal peptide" evidence="3">
    <location>
        <begin position="1"/>
        <end position="24"/>
    </location>
</feature>
<feature type="chain" id="PRO_0000005053" description="Growth-regulated alpha protein">
    <location>
        <begin position="25"/>
        <end position="96"/>
    </location>
</feature>
<feature type="chain" id="PRO_0000005054" description="KC(5-72)">
    <location>
        <begin position="29"/>
        <end position="96"/>
    </location>
</feature>
<feature type="disulfide bond" evidence="1">
    <location>
        <begin position="33"/>
        <end position="59"/>
    </location>
</feature>
<feature type="disulfide bond" evidence="1">
    <location>
        <begin position="35"/>
        <end position="75"/>
    </location>
</feature>
<protein>
    <recommendedName>
        <fullName>Growth-regulated alpha protein</fullName>
    </recommendedName>
    <alternativeName>
        <fullName>C-X-C motif chemokine 1</fullName>
    </alternativeName>
    <alternativeName>
        <fullName>Platelet-derived growth factor-inducible protein KC</fullName>
    </alternativeName>
    <alternativeName>
        <fullName>Secretory protein N51</fullName>
    </alternativeName>
    <component>
        <recommendedName>
            <fullName>KC(5-72)</fullName>
        </recommendedName>
        <alternativeName>
            <fullName>Hematopoietic synergistic factor</fullName>
            <shortName>HSF</shortName>
        </alternativeName>
        <alternativeName>
            <fullName>KC-T</fullName>
        </alternativeName>
    </component>
</protein>
<comment type="function">
    <text evidence="1 2">Has chemotactic activity for neutrophils. Contributes to neutrophil activation during inflammation (By similarity). Hematoregulatory chemokine, which, in vitro, suppresses hematopoietic progenitor cell proliferation. KC(5-72) shows a highly enhanced hematopoietic activity.</text>
</comment>
<comment type="subcellular location">
    <subcellularLocation>
        <location>Secreted</location>
    </subcellularLocation>
</comment>
<comment type="induction">
    <text evidence="1">By platelet-derived growth factor. In lung, by lipopolysaccharide or inflammation (By similarity).</text>
</comment>
<comment type="PTM">
    <text evidence="2">The N-terminal processed form KC(5-72) is produced by proteolytic cleavage after secretion from bone marrow stromal cells.</text>
</comment>
<comment type="similarity">
    <text evidence="3">Belongs to the intercrine alpha (chemokine CxC) family.</text>
</comment>
<accession>P12850</accession>
<reference key="1">
    <citation type="journal article" date="1989" name="J. Biol. Chem.">
        <title>The platelet-derived growth factor-inducible KC gene encodes a secretory protein related to platelet alpha-granule proteins.</title>
        <authorList>
            <person name="Oquendo P."/>
            <person name="Alberta J."/>
            <person name="Wen D."/>
            <person name="Graycar J.L."/>
            <person name="Derynck R."/>
            <person name="Stiles C.D."/>
        </authorList>
    </citation>
    <scope>NUCLEOTIDE SEQUENCE [MRNA]</scope>
</reference>
<reference key="2">
    <citation type="journal article" date="1989" name="Exp. Cell Res.">
        <title>Cloning and sequence of a secretory protein induced by growth factors in mouse fibroblasts.</title>
        <authorList>
            <person name="Ryseck R.P."/>
            <person name="Macdonald-Bravo H."/>
            <person name="Mattei M.-G."/>
            <person name="Bravo R."/>
        </authorList>
    </citation>
    <scope>NUCLEOTIDE SEQUENCE [GENOMIC DNA]</scope>
</reference>
<reference key="3">
    <citation type="submission" date="1995-02" db="EMBL/GenBank/DDBJ databases">
        <authorList>
            <person name="Bozic C.R."/>
            <person name="Kolakowski L.F. Jr."/>
            <person name="von Uexkull C."/>
            <person name="Garcia-Rodriguez M."/>
            <person name="Conklyn M.J."/>
            <person name="Breslow R."/>
            <person name="Showell H.J."/>
            <person name="Gerard N.P."/>
            <person name="Gerard C."/>
        </authorList>
    </citation>
    <scope>NUCLEOTIDE SEQUENCE [GENOMIC DNA]</scope>
    <source>
        <strain>129/Sv</strain>
    </source>
</reference>
<reference key="4">
    <citation type="journal article" date="1995" name="J. Immunol.">
        <title>Two structurally distinct kappa B sequence motifs cooperatively control LPS-induced KC gene transcription in mouse macrophages.</title>
        <authorList>
            <person name="Ohmori Y."/>
            <person name="Fukumoto S."/>
            <person name="Hamilton T.A."/>
        </authorList>
    </citation>
    <scope>NUCLEOTIDE SEQUENCE [GENOMIC DNA] OF 1-10</scope>
    <source>
        <tissue>Liver</tissue>
    </source>
</reference>
<reference key="5">
    <citation type="journal article" date="2000" name="J. Immunol.">
        <title>Identification of unique truncated KC/GRO beta chemokines with potent hematopoietic and anti-infective activities.</title>
        <authorList>
            <person name="King A.G."/>
            <person name="Johanson K."/>
            <person name="Frey C.L."/>
            <person name="DeMarsh P.L."/>
            <person name="White J.R."/>
            <person name="McDevitt P."/>
            <person name="McNulty D."/>
            <person name="Balcarek J."/>
            <person name="Jonak Z.L."/>
            <person name="Bhatnagar P.K."/>
            <person name="Pelus L.M."/>
        </authorList>
    </citation>
    <scope>PROTEIN SEQUENCE OF 29-46</scope>
    <scope>IDENTIFICATION OF KC(5-72) BY MASS SPECTROMETRY</scope>
    <scope>PROTEOLYTIC PROCESSING OF N-TERMINUS</scope>
    <scope>FUNCTION</scope>
</reference>
<keyword id="KW-0202">Cytokine</keyword>
<keyword id="KW-0903">Direct protein sequencing</keyword>
<keyword id="KW-1015">Disulfide bond</keyword>
<keyword id="KW-0339">Growth factor</keyword>
<keyword id="KW-0395">Inflammatory response</keyword>
<keyword id="KW-1185">Reference proteome</keyword>
<keyword id="KW-0964">Secreted</keyword>
<keyword id="KW-0732">Signal</keyword>
<dbReference type="EMBL" id="J04596">
    <property type="protein sequence ID" value="AAA40131.1"/>
    <property type="molecule type" value="mRNA"/>
</dbReference>
<dbReference type="EMBL" id="U20634">
    <property type="protein sequence ID" value="AAB03376.1"/>
    <property type="molecule type" value="Genomic_DNA"/>
</dbReference>
<dbReference type="EMBL" id="U20527">
    <property type="protein sequence ID" value="AAB03376.1"/>
    <property type="status" value="JOINED"/>
    <property type="molecule type" value="Genomic_DNA"/>
</dbReference>
<dbReference type="EMBL" id="S79767">
    <property type="status" value="NOT_ANNOTATED_CDS"/>
    <property type="molecule type" value="Genomic_DNA"/>
</dbReference>
<dbReference type="CCDS" id="CCDS39143.1"/>
<dbReference type="PIR" id="A32954">
    <property type="entry name" value="A32954"/>
</dbReference>
<dbReference type="RefSeq" id="NP_032202.1">
    <property type="nucleotide sequence ID" value="NM_008176.3"/>
</dbReference>
<dbReference type="SMR" id="P12850"/>
<dbReference type="FunCoup" id="P12850">
    <property type="interactions" value="1077"/>
</dbReference>
<dbReference type="IntAct" id="P12850">
    <property type="interactions" value="1"/>
</dbReference>
<dbReference type="MINT" id="P12850"/>
<dbReference type="STRING" id="10090.ENSMUSP00000031327"/>
<dbReference type="PaxDb" id="10090-ENSMUSP00000031327"/>
<dbReference type="ProteomicsDB" id="271098"/>
<dbReference type="ABCD" id="P12850">
    <property type="antibodies" value="3 sequenced antibodies"/>
</dbReference>
<dbReference type="DNASU" id="14825"/>
<dbReference type="Ensembl" id="ENSMUST00000031327.9">
    <property type="protein sequence ID" value="ENSMUSP00000031327.9"/>
    <property type="gene ID" value="ENSMUSG00000029380.12"/>
</dbReference>
<dbReference type="GeneID" id="14825"/>
<dbReference type="KEGG" id="mmu:14825"/>
<dbReference type="UCSC" id="uc008ybl.2">
    <property type="organism name" value="mouse"/>
</dbReference>
<dbReference type="AGR" id="MGI:108068"/>
<dbReference type="CTD" id="2919"/>
<dbReference type="MGI" id="MGI:108068">
    <property type="gene designation" value="Cxcl1"/>
</dbReference>
<dbReference type="VEuPathDB" id="HostDB:ENSMUSG00000029380"/>
<dbReference type="eggNOG" id="ENOG502S7MM">
    <property type="taxonomic scope" value="Eukaryota"/>
</dbReference>
<dbReference type="GeneTree" id="ENSGT00940000155233"/>
<dbReference type="HOGENOM" id="CLU_143902_1_0_1"/>
<dbReference type="InParanoid" id="P12850"/>
<dbReference type="OMA" id="NGREACL"/>
<dbReference type="OrthoDB" id="8872899at2759"/>
<dbReference type="PhylomeDB" id="P12850"/>
<dbReference type="TreeFam" id="TF333433"/>
<dbReference type="Reactome" id="R-MMU-380108">
    <property type="pathway name" value="Chemokine receptors bind chemokines"/>
</dbReference>
<dbReference type="Reactome" id="R-MMU-418594">
    <property type="pathway name" value="G alpha (i) signalling events"/>
</dbReference>
<dbReference type="Reactome" id="R-MMU-6798695">
    <property type="pathway name" value="Neutrophil degranulation"/>
</dbReference>
<dbReference type="BioGRID-ORCS" id="14825">
    <property type="hits" value="0 hits in 79 CRISPR screens"/>
</dbReference>
<dbReference type="ChiTaRS" id="Cxcl1">
    <property type="organism name" value="mouse"/>
</dbReference>
<dbReference type="PRO" id="PR:P12850"/>
<dbReference type="Proteomes" id="UP000000589">
    <property type="component" value="Chromosome 5"/>
</dbReference>
<dbReference type="RNAct" id="P12850">
    <property type="molecule type" value="protein"/>
</dbReference>
<dbReference type="Bgee" id="ENSMUSG00000029380">
    <property type="expression patterns" value="Expressed in endothelial cell of lymphatic vessel and 95 other cell types or tissues"/>
</dbReference>
<dbReference type="ExpressionAtlas" id="P12850">
    <property type="expression patterns" value="baseline and differential"/>
</dbReference>
<dbReference type="GO" id="GO:0005615">
    <property type="term" value="C:extracellular space"/>
    <property type="evidence" value="ECO:0000314"/>
    <property type="project" value="UniProtKB"/>
</dbReference>
<dbReference type="GO" id="GO:0008009">
    <property type="term" value="F:chemokine activity"/>
    <property type="evidence" value="ECO:0007669"/>
    <property type="project" value="InterPro"/>
</dbReference>
<dbReference type="GO" id="GO:0008083">
    <property type="term" value="F:growth factor activity"/>
    <property type="evidence" value="ECO:0007669"/>
    <property type="project" value="UniProtKB-KW"/>
</dbReference>
<dbReference type="GO" id="GO:0097398">
    <property type="term" value="P:cellular response to interleukin-17"/>
    <property type="evidence" value="ECO:0000314"/>
    <property type="project" value="MGI"/>
</dbReference>
<dbReference type="GO" id="GO:0006955">
    <property type="term" value="P:immune response"/>
    <property type="evidence" value="ECO:0007669"/>
    <property type="project" value="InterPro"/>
</dbReference>
<dbReference type="GO" id="GO:0006954">
    <property type="term" value="P:inflammatory response"/>
    <property type="evidence" value="ECO:0007669"/>
    <property type="project" value="UniProtKB-KW"/>
</dbReference>
<dbReference type="GO" id="GO:1902035">
    <property type="term" value="P:positive regulation of hematopoietic stem cell proliferation"/>
    <property type="evidence" value="ECO:0000314"/>
    <property type="project" value="UniProtKB"/>
</dbReference>
<dbReference type="GO" id="GO:0070965">
    <property type="term" value="P:positive regulation of neutrophil mediated killing of fungus"/>
    <property type="evidence" value="ECO:0000314"/>
    <property type="project" value="UniProtKB"/>
</dbReference>
<dbReference type="GO" id="GO:0032930">
    <property type="term" value="P:positive regulation of superoxide anion generation"/>
    <property type="evidence" value="ECO:0000314"/>
    <property type="project" value="UniProtKB"/>
</dbReference>
<dbReference type="CDD" id="cd00273">
    <property type="entry name" value="Chemokine_CXC"/>
    <property type="match status" value="1"/>
</dbReference>
<dbReference type="FunFam" id="2.40.50.40:FF:000004">
    <property type="entry name" value="C-X-C motif chemokine"/>
    <property type="match status" value="1"/>
</dbReference>
<dbReference type="Gene3D" id="2.40.50.40">
    <property type="match status" value="1"/>
</dbReference>
<dbReference type="InterPro" id="IPR039809">
    <property type="entry name" value="Chemokine_b/g/d"/>
</dbReference>
<dbReference type="InterPro" id="IPR001089">
    <property type="entry name" value="Chemokine_CXC"/>
</dbReference>
<dbReference type="InterPro" id="IPR018048">
    <property type="entry name" value="Chemokine_CXC_CS"/>
</dbReference>
<dbReference type="InterPro" id="IPR001811">
    <property type="entry name" value="Chemokine_IL8-like_dom"/>
</dbReference>
<dbReference type="InterPro" id="IPR033899">
    <property type="entry name" value="CXC_Chemokine_domain"/>
</dbReference>
<dbReference type="InterPro" id="IPR036048">
    <property type="entry name" value="Interleukin_8-like_sf"/>
</dbReference>
<dbReference type="PANTHER" id="PTHR12015:SF192">
    <property type="entry name" value="GROWTH-REGULATED ALPHA PROTEIN"/>
    <property type="match status" value="1"/>
</dbReference>
<dbReference type="PANTHER" id="PTHR12015">
    <property type="entry name" value="SMALL INDUCIBLE CYTOKINE A"/>
    <property type="match status" value="1"/>
</dbReference>
<dbReference type="Pfam" id="PF00048">
    <property type="entry name" value="IL8"/>
    <property type="match status" value="1"/>
</dbReference>
<dbReference type="PRINTS" id="PR00436">
    <property type="entry name" value="INTERLEUKIN8"/>
</dbReference>
<dbReference type="PRINTS" id="PR00437">
    <property type="entry name" value="SMALLCYTKCXC"/>
</dbReference>
<dbReference type="SMART" id="SM00199">
    <property type="entry name" value="SCY"/>
    <property type="match status" value="1"/>
</dbReference>
<dbReference type="SUPFAM" id="SSF54117">
    <property type="entry name" value="Interleukin 8-like chemokines"/>
    <property type="match status" value="1"/>
</dbReference>
<dbReference type="PROSITE" id="PS00471">
    <property type="entry name" value="SMALL_CYTOKINES_CXC"/>
    <property type="match status" value="1"/>
</dbReference>
<gene>
    <name type="primary">Cxcl1</name>
    <name type="synonym">Gro</name>
    <name type="synonym">Gro1</name>
    <name type="synonym">Mgsa</name>
    <name type="synonym">Scyb1</name>
</gene>
<proteinExistence type="evidence at protein level"/>
<name>GROA_MOUSE</name>
<organism>
    <name type="scientific">Mus musculus</name>
    <name type="common">Mouse</name>
    <dbReference type="NCBI Taxonomy" id="10090"/>
    <lineage>
        <taxon>Eukaryota</taxon>
        <taxon>Metazoa</taxon>
        <taxon>Chordata</taxon>
        <taxon>Craniata</taxon>
        <taxon>Vertebrata</taxon>
        <taxon>Euteleostomi</taxon>
        <taxon>Mammalia</taxon>
        <taxon>Eutheria</taxon>
        <taxon>Euarchontoglires</taxon>
        <taxon>Glires</taxon>
        <taxon>Rodentia</taxon>
        <taxon>Myomorpha</taxon>
        <taxon>Muroidea</taxon>
        <taxon>Muridae</taxon>
        <taxon>Murinae</taxon>
        <taxon>Mus</taxon>
        <taxon>Mus</taxon>
    </lineage>
</organism>